<organism>
    <name type="scientific">Trichormus variabilis (strain ATCC 29413 / PCC 7937)</name>
    <name type="common">Anabaena variabilis</name>
    <dbReference type="NCBI Taxonomy" id="240292"/>
    <lineage>
        <taxon>Bacteria</taxon>
        <taxon>Bacillati</taxon>
        <taxon>Cyanobacteriota</taxon>
        <taxon>Cyanophyceae</taxon>
        <taxon>Nostocales</taxon>
        <taxon>Nostocaceae</taxon>
        <taxon>Trichormus</taxon>
    </lineage>
</organism>
<sequence length="156" mass="17864">MSRRGVIQRRPVPPDSVYNSRLVSMIIRRIMRHGKKSLAARIVYDALKTIEERTGNNALEVFERAVRNATPLVEVKARRVGGATYQVPMEVRTERGTTLALRWLVQFSRSRPGRTMASRLANELLDAANESGNAIRKREETHRMAEANKAFAHYRY</sequence>
<evidence type="ECO:0000255" key="1">
    <source>
        <dbReference type="HAMAP-Rule" id="MF_00480"/>
    </source>
</evidence>
<evidence type="ECO:0000305" key="2"/>
<feature type="chain" id="PRO_0000241748" description="Small ribosomal subunit protein uS7">
    <location>
        <begin position="1"/>
        <end position="156"/>
    </location>
</feature>
<dbReference type="EMBL" id="CP000117">
    <property type="protein sequence ID" value="ABA20913.1"/>
    <property type="molecule type" value="Genomic_DNA"/>
</dbReference>
<dbReference type="RefSeq" id="WP_010998477.1">
    <property type="nucleotide sequence ID" value="NC_007413.1"/>
</dbReference>
<dbReference type="SMR" id="Q3MDM3"/>
<dbReference type="STRING" id="240292.Ava_1289"/>
<dbReference type="GeneID" id="58723957"/>
<dbReference type="KEGG" id="ava:Ava_1289"/>
<dbReference type="eggNOG" id="COG0049">
    <property type="taxonomic scope" value="Bacteria"/>
</dbReference>
<dbReference type="HOGENOM" id="CLU_072226_1_1_3"/>
<dbReference type="Proteomes" id="UP000002533">
    <property type="component" value="Chromosome"/>
</dbReference>
<dbReference type="GO" id="GO:0015935">
    <property type="term" value="C:small ribosomal subunit"/>
    <property type="evidence" value="ECO:0007669"/>
    <property type="project" value="InterPro"/>
</dbReference>
<dbReference type="GO" id="GO:0019843">
    <property type="term" value="F:rRNA binding"/>
    <property type="evidence" value="ECO:0007669"/>
    <property type="project" value="UniProtKB-UniRule"/>
</dbReference>
<dbReference type="GO" id="GO:0003735">
    <property type="term" value="F:structural constituent of ribosome"/>
    <property type="evidence" value="ECO:0007669"/>
    <property type="project" value="InterPro"/>
</dbReference>
<dbReference type="GO" id="GO:0000049">
    <property type="term" value="F:tRNA binding"/>
    <property type="evidence" value="ECO:0007669"/>
    <property type="project" value="UniProtKB-UniRule"/>
</dbReference>
<dbReference type="GO" id="GO:0006412">
    <property type="term" value="P:translation"/>
    <property type="evidence" value="ECO:0007669"/>
    <property type="project" value="UniProtKB-UniRule"/>
</dbReference>
<dbReference type="CDD" id="cd14871">
    <property type="entry name" value="uS7_Chloroplast"/>
    <property type="match status" value="1"/>
</dbReference>
<dbReference type="FunFam" id="1.10.455.10:FF:000001">
    <property type="entry name" value="30S ribosomal protein S7"/>
    <property type="match status" value="1"/>
</dbReference>
<dbReference type="Gene3D" id="1.10.455.10">
    <property type="entry name" value="Ribosomal protein S7 domain"/>
    <property type="match status" value="1"/>
</dbReference>
<dbReference type="HAMAP" id="MF_00480_B">
    <property type="entry name" value="Ribosomal_uS7_B"/>
    <property type="match status" value="1"/>
</dbReference>
<dbReference type="InterPro" id="IPR000235">
    <property type="entry name" value="Ribosomal_uS7"/>
</dbReference>
<dbReference type="InterPro" id="IPR005717">
    <property type="entry name" value="Ribosomal_uS7_bac/org-type"/>
</dbReference>
<dbReference type="InterPro" id="IPR020606">
    <property type="entry name" value="Ribosomal_uS7_CS"/>
</dbReference>
<dbReference type="InterPro" id="IPR023798">
    <property type="entry name" value="Ribosomal_uS7_dom"/>
</dbReference>
<dbReference type="InterPro" id="IPR036823">
    <property type="entry name" value="Ribosomal_uS7_dom_sf"/>
</dbReference>
<dbReference type="NCBIfam" id="TIGR01029">
    <property type="entry name" value="rpsG_bact"/>
    <property type="match status" value="1"/>
</dbReference>
<dbReference type="PANTHER" id="PTHR11205">
    <property type="entry name" value="RIBOSOMAL PROTEIN S7"/>
    <property type="match status" value="1"/>
</dbReference>
<dbReference type="Pfam" id="PF00177">
    <property type="entry name" value="Ribosomal_S7"/>
    <property type="match status" value="1"/>
</dbReference>
<dbReference type="PIRSF" id="PIRSF002122">
    <property type="entry name" value="RPS7p_RPS7a_RPS5e_RPS7o"/>
    <property type="match status" value="1"/>
</dbReference>
<dbReference type="SUPFAM" id="SSF47973">
    <property type="entry name" value="Ribosomal protein S7"/>
    <property type="match status" value="1"/>
</dbReference>
<dbReference type="PROSITE" id="PS00052">
    <property type="entry name" value="RIBOSOMAL_S7"/>
    <property type="match status" value="1"/>
</dbReference>
<keyword id="KW-0687">Ribonucleoprotein</keyword>
<keyword id="KW-0689">Ribosomal protein</keyword>
<keyword id="KW-0694">RNA-binding</keyword>
<keyword id="KW-0699">rRNA-binding</keyword>
<keyword id="KW-0820">tRNA-binding</keyword>
<reference key="1">
    <citation type="journal article" date="2014" name="Stand. Genomic Sci.">
        <title>Complete genome sequence of Anabaena variabilis ATCC 29413.</title>
        <authorList>
            <person name="Thiel T."/>
            <person name="Pratte B.S."/>
            <person name="Zhong J."/>
            <person name="Goodwin L."/>
            <person name="Copeland A."/>
            <person name="Lucas S."/>
            <person name="Han C."/>
            <person name="Pitluck S."/>
            <person name="Land M.L."/>
            <person name="Kyrpides N.C."/>
            <person name="Woyke T."/>
        </authorList>
    </citation>
    <scope>NUCLEOTIDE SEQUENCE [LARGE SCALE GENOMIC DNA]</scope>
    <source>
        <strain>ATCC 29413 / PCC 7937</strain>
    </source>
</reference>
<protein>
    <recommendedName>
        <fullName evidence="1">Small ribosomal subunit protein uS7</fullName>
    </recommendedName>
    <alternativeName>
        <fullName evidence="2">30S ribosomal protein S7</fullName>
    </alternativeName>
</protein>
<proteinExistence type="inferred from homology"/>
<comment type="function">
    <text evidence="1">One of the primary rRNA binding proteins, it binds directly to 16S rRNA where it nucleates assembly of the head domain of the 30S subunit. Is located at the subunit interface close to the decoding center, probably blocks exit of the E-site tRNA.</text>
</comment>
<comment type="subunit">
    <text evidence="1">Part of the 30S ribosomal subunit. Contacts proteins S9 and S11.</text>
</comment>
<comment type="similarity">
    <text evidence="1">Belongs to the universal ribosomal protein uS7 family.</text>
</comment>
<accession>Q3MDM3</accession>
<name>RS7_TRIV2</name>
<gene>
    <name evidence="1" type="primary">rpsG</name>
    <name evidence="1" type="synonym">rps7</name>
    <name type="ordered locus">Ava_1289</name>
</gene>